<accession>A6TWJ0</accession>
<gene>
    <name evidence="1" type="primary">rpoB</name>
    <name type="ordered locus">Amet_4486</name>
</gene>
<comment type="function">
    <text evidence="1">DNA-dependent RNA polymerase catalyzes the transcription of DNA into RNA using the four ribonucleoside triphosphates as substrates.</text>
</comment>
<comment type="catalytic activity">
    <reaction evidence="1">
        <text>RNA(n) + a ribonucleoside 5'-triphosphate = RNA(n+1) + diphosphate</text>
        <dbReference type="Rhea" id="RHEA:21248"/>
        <dbReference type="Rhea" id="RHEA-COMP:14527"/>
        <dbReference type="Rhea" id="RHEA-COMP:17342"/>
        <dbReference type="ChEBI" id="CHEBI:33019"/>
        <dbReference type="ChEBI" id="CHEBI:61557"/>
        <dbReference type="ChEBI" id="CHEBI:140395"/>
        <dbReference type="EC" id="2.7.7.6"/>
    </reaction>
</comment>
<comment type="subunit">
    <text evidence="1">The RNAP catalytic core consists of 2 alpha, 1 beta, 1 beta' and 1 omega subunit. When a sigma factor is associated with the core the holoenzyme is formed, which can initiate transcription.</text>
</comment>
<comment type="similarity">
    <text evidence="1">Belongs to the RNA polymerase beta chain family.</text>
</comment>
<name>RPOB_ALKMQ</name>
<evidence type="ECO:0000255" key="1">
    <source>
        <dbReference type="HAMAP-Rule" id="MF_01321"/>
    </source>
</evidence>
<evidence type="ECO:0000256" key="2">
    <source>
        <dbReference type="SAM" id="MobiDB-lite"/>
    </source>
</evidence>
<protein>
    <recommendedName>
        <fullName evidence="1">DNA-directed RNA polymerase subunit beta</fullName>
        <shortName evidence="1">RNAP subunit beta</shortName>
        <ecNumber evidence="1">2.7.7.6</ecNumber>
    </recommendedName>
    <alternativeName>
        <fullName evidence="1">RNA polymerase subunit beta</fullName>
    </alternativeName>
    <alternativeName>
        <fullName evidence="1">Transcriptase subunit beta</fullName>
    </alternativeName>
</protein>
<organism>
    <name type="scientific">Alkaliphilus metalliredigens (strain QYMF)</name>
    <dbReference type="NCBI Taxonomy" id="293826"/>
    <lineage>
        <taxon>Bacteria</taxon>
        <taxon>Bacillati</taxon>
        <taxon>Bacillota</taxon>
        <taxon>Clostridia</taxon>
        <taxon>Peptostreptococcales</taxon>
        <taxon>Natronincolaceae</taxon>
        <taxon>Alkaliphilus</taxon>
    </lineage>
</organism>
<proteinExistence type="inferred from homology"/>
<sequence length="1246" mass="139729">MPHPVQLGKKVRMSYSQINEVLDMPNLIELQKEAYDWFLDEGLREVFNDISPIQDYTGNLILEFVDYSLDENPKYDVGESKERDATYAAPLKVKVRLINKETGEVKEQEVFMGDFPLMTDTGTFIINGAERVIVSQLVRSPGVYYNRQFDKTGKQLYSATVIPNRGAWLEYETDSNDVVSVRVDRTRKQPATVLLRALGYGTDQQIKDLLGEDERILATLEKDNTKTAEEGLLEIYKKLRPGEPPTIESATSLINTLFFDAKRYDLAKVGRYKFSKKLSLANRIMSHKAAENVSDPQTGEILVEEGTKIDREISLLIQNSGINEVHVYSEENKKIKVIGNHFVDIKTHIDFDIQDLKLRERVYYPVLREILDTFDSEAEIKEALKERKRELIPKHILKSDIVASINYAFNLAHEIGNVDDIDHLGNRRLRSVGELLQNQFRIGLSRMERVVKERMTIQDVDLVTPQALINIRPVAASIKEFFGSSQLSQFMDQTNPLAELTHKRRLSALGPGGLSRERAGFEVRDVHHSHYGRMCPIETPEGPNIGLINSLSSYARINEYGFIESPYRKVDKKRDVVTTDIEYLTADEEDLFIIAQANEPLDEEGKFGNKRVTSRTKFGGIDVVPFDEVDYMDVSPKQVVSVATAMIPFLENDDANRALMGSNMQRQAVPLLITDAPIIGTGMEYKAAKDSGVVVVARNSGIVDYVASNEIVVKLEDGQKDRYKLLKFKRSNQGTCINQKPIVSKGERIEAGDVIADGPSTDRGEIALGRNCLVGFMAWEGYNFEDAILINEKLVKEDALTTIHIEEYESEARDTKLGPEEITRDIPNVGEDSLKDLDERGVIRIGAEVESGDILVGKVTPKGETELTAEERLLRAIFGEKAREVRDTSLKVPHGENGIIVDIKVFTRENGDELPPGVNELVRVYIAKKKKINVGDKMAGRHGNKGVISRILPQEDMPFLEDGTPLEIVLNPLGVPSRMNIGQILEVHLGLAAKALGWKVATPVFDGANEFDIMDALEESGYPRGGKLKLQDGRTGEAFDNPVTVGYMYMLKLHHLVDDKIHARSTGPYSLVTQQPLGGKAQFGGQRFGEMEVWALEAYGAAHTLQEILTVKSDDVVGRVKTYECIVKGENIPEPGVPESFKVLIKELQSLCLDVKVLTDDDHELEIKETIDDDAGEMSLEHGDFDYGLEEPTVPEGSHITDEEEKDEDNDSEEALITEEDFEPTSVETEYAEDDDEFDGYNDFKA</sequence>
<keyword id="KW-0240">DNA-directed RNA polymerase</keyword>
<keyword id="KW-0548">Nucleotidyltransferase</keyword>
<keyword id="KW-1185">Reference proteome</keyword>
<keyword id="KW-0804">Transcription</keyword>
<keyword id="KW-0808">Transferase</keyword>
<reference key="1">
    <citation type="journal article" date="2016" name="Genome Announc.">
        <title>Complete genome sequence of Alkaliphilus metalliredigens strain QYMF, an alkaliphilic and metal-reducing bacterium isolated from borax-contaminated leachate ponds.</title>
        <authorList>
            <person name="Hwang C."/>
            <person name="Copeland A."/>
            <person name="Lucas S."/>
            <person name="Lapidus A."/>
            <person name="Barry K."/>
            <person name="Detter J.C."/>
            <person name="Glavina Del Rio T."/>
            <person name="Hammon N."/>
            <person name="Israni S."/>
            <person name="Dalin E."/>
            <person name="Tice H."/>
            <person name="Pitluck S."/>
            <person name="Chertkov O."/>
            <person name="Brettin T."/>
            <person name="Bruce D."/>
            <person name="Han C."/>
            <person name="Schmutz J."/>
            <person name="Larimer F."/>
            <person name="Land M.L."/>
            <person name="Hauser L."/>
            <person name="Kyrpides N."/>
            <person name="Mikhailova N."/>
            <person name="Ye Q."/>
            <person name="Zhou J."/>
            <person name="Richardson P."/>
            <person name="Fields M.W."/>
        </authorList>
    </citation>
    <scope>NUCLEOTIDE SEQUENCE [LARGE SCALE GENOMIC DNA]</scope>
    <source>
        <strain>QYMF</strain>
    </source>
</reference>
<dbReference type="EC" id="2.7.7.6" evidence="1"/>
<dbReference type="EMBL" id="CP000724">
    <property type="protein sequence ID" value="ABR50558.1"/>
    <property type="molecule type" value="Genomic_DNA"/>
</dbReference>
<dbReference type="RefSeq" id="WP_012065449.1">
    <property type="nucleotide sequence ID" value="NC_009633.1"/>
</dbReference>
<dbReference type="SMR" id="A6TWJ0"/>
<dbReference type="STRING" id="293826.Amet_4486"/>
<dbReference type="KEGG" id="amt:Amet_4486"/>
<dbReference type="eggNOG" id="COG0085">
    <property type="taxonomic scope" value="Bacteria"/>
</dbReference>
<dbReference type="HOGENOM" id="CLU_000524_4_1_9"/>
<dbReference type="OrthoDB" id="9803954at2"/>
<dbReference type="Proteomes" id="UP000001572">
    <property type="component" value="Chromosome"/>
</dbReference>
<dbReference type="GO" id="GO:0000428">
    <property type="term" value="C:DNA-directed RNA polymerase complex"/>
    <property type="evidence" value="ECO:0007669"/>
    <property type="project" value="UniProtKB-KW"/>
</dbReference>
<dbReference type="GO" id="GO:0003677">
    <property type="term" value="F:DNA binding"/>
    <property type="evidence" value="ECO:0007669"/>
    <property type="project" value="UniProtKB-UniRule"/>
</dbReference>
<dbReference type="GO" id="GO:0003899">
    <property type="term" value="F:DNA-directed RNA polymerase activity"/>
    <property type="evidence" value="ECO:0007669"/>
    <property type="project" value="UniProtKB-UniRule"/>
</dbReference>
<dbReference type="GO" id="GO:0032549">
    <property type="term" value="F:ribonucleoside binding"/>
    <property type="evidence" value="ECO:0007669"/>
    <property type="project" value="InterPro"/>
</dbReference>
<dbReference type="GO" id="GO:0006351">
    <property type="term" value="P:DNA-templated transcription"/>
    <property type="evidence" value="ECO:0007669"/>
    <property type="project" value="UniProtKB-UniRule"/>
</dbReference>
<dbReference type="CDD" id="cd00653">
    <property type="entry name" value="RNA_pol_B_RPB2"/>
    <property type="match status" value="1"/>
</dbReference>
<dbReference type="FunFam" id="3.90.1800.10:FF:000001">
    <property type="entry name" value="DNA-directed RNA polymerase subunit beta"/>
    <property type="match status" value="1"/>
</dbReference>
<dbReference type="Gene3D" id="2.40.50.100">
    <property type="match status" value="1"/>
</dbReference>
<dbReference type="Gene3D" id="2.40.50.150">
    <property type="match status" value="1"/>
</dbReference>
<dbReference type="Gene3D" id="3.90.1100.10">
    <property type="match status" value="1"/>
</dbReference>
<dbReference type="Gene3D" id="2.30.150.10">
    <property type="entry name" value="DNA-directed RNA polymerase, beta subunit, external 1 domain"/>
    <property type="match status" value="1"/>
</dbReference>
<dbReference type="Gene3D" id="2.40.270.10">
    <property type="entry name" value="DNA-directed RNA polymerase, subunit 2, domain 6"/>
    <property type="match status" value="1"/>
</dbReference>
<dbReference type="Gene3D" id="3.90.1800.10">
    <property type="entry name" value="RNA polymerase alpha subunit dimerisation domain"/>
    <property type="match status" value="1"/>
</dbReference>
<dbReference type="Gene3D" id="3.90.1110.10">
    <property type="entry name" value="RNA polymerase Rpb2, domain 2"/>
    <property type="match status" value="1"/>
</dbReference>
<dbReference type="HAMAP" id="MF_01321">
    <property type="entry name" value="RNApol_bact_RpoB"/>
    <property type="match status" value="1"/>
</dbReference>
<dbReference type="InterPro" id="IPR042107">
    <property type="entry name" value="DNA-dir_RNA_pol_bsu_ext_1_sf"/>
</dbReference>
<dbReference type="InterPro" id="IPR019462">
    <property type="entry name" value="DNA-dir_RNA_pol_bsu_external_1"/>
</dbReference>
<dbReference type="InterPro" id="IPR015712">
    <property type="entry name" value="DNA-dir_RNA_pol_su2"/>
</dbReference>
<dbReference type="InterPro" id="IPR007120">
    <property type="entry name" value="DNA-dir_RNAP_su2_dom"/>
</dbReference>
<dbReference type="InterPro" id="IPR037033">
    <property type="entry name" value="DNA-dir_RNAP_su2_hyb_sf"/>
</dbReference>
<dbReference type="InterPro" id="IPR010243">
    <property type="entry name" value="RNA_pol_bsu_bac"/>
</dbReference>
<dbReference type="InterPro" id="IPR007121">
    <property type="entry name" value="RNA_pol_bsu_CS"/>
</dbReference>
<dbReference type="InterPro" id="IPR007644">
    <property type="entry name" value="RNA_pol_bsu_protrusion"/>
</dbReference>
<dbReference type="InterPro" id="IPR007642">
    <property type="entry name" value="RNA_pol_Rpb2_2"/>
</dbReference>
<dbReference type="InterPro" id="IPR037034">
    <property type="entry name" value="RNA_pol_Rpb2_2_sf"/>
</dbReference>
<dbReference type="InterPro" id="IPR007645">
    <property type="entry name" value="RNA_pol_Rpb2_3"/>
</dbReference>
<dbReference type="InterPro" id="IPR007641">
    <property type="entry name" value="RNA_pol_Rpb2_7"/>
</dbReference>
<dbReference type="InterPro" id="IPR014724">
    <property type="entry name" value="RNA_pol_RPB2_OB-fold"/>
</dbReference>
<dbReference type="NCBIfam" id="NF001616">
    <property type="entry name" value="PRK00405.1"/>
    <property type="match status" value="1"/>
</dbReference>
<dbReference type="NCBIfam" id="TIGR02013">
    <property type="entry name" value="rpoB"/>
    <property type="match status" value="1"/>
</dbReference>
<dbReference type="PANTHER" id="PTHR20856">
    <property type="entry name" value="DNA-DIRECTED RNA POLYMERASE I SUBUNIT 2"/>
    <property type="match status" value="1"/>
</dbReference>
<dbReference type="Pfam" id="PF04563">
    <property type="entry name" value="RNA_pol_Rpb2_1"/>
    <property type="match status" value="1"/>
</dbReference>
<dbReference type="Pfam" id="PF04561">
    <property type="entry name" value="RNA_pol_Rpb2_2"/>
    <property type="match status" value="2"/>
</dbReference>
<dbReference type="Pfam" id="PF04565">
    <property type="entry name" value="RNA_pol_Rpb2_3"/>
    <property type="match status" value="1"/>
</dbReference>
<dbReference type="Pfam" id="PF10385">
    <property type="entry name" value="RNA_pol_Rpb2_45"/>
    <property type="match status" value="1"/>
</dbReference>
<dbReference type="Pfam" id="PF00562">
    <property type="entry name" value="RNA_pol_Rpb2_6"/>
    <property type="match status" value="1"/>
</dbReference>
<dbReference type="Pfam" id="PF04560">
    <property type="entry name" value="RNA_pol_Rpb2_7"/>
    <property type="match status" value="1"/>
</dbReference>
<dbReference type="SUPFAM" id="SSF64484">
    <property type="entry name" value="beta and beta-prime subunits of DNA dependent RNA-polymerase"/>
    <property type="match status" value="1"/>
</dbReference>
<dbReference type="PROSITE" id="PS01166">
    <property type="entry name" value="RNA_POL_BETA"/>
    <property type="match status" value="1"/>
</dbReference>
<feature type="chain" id="PRO_0000329161" description="DNA-directed RNA polymerase subunit beta">
    <location>
        <begin position="1"/>
        <end position="1246"/>
    </location>
</feature>
<feature type="region of interest" description="Disordered" evidence="2">
    <location>
        <begin position="1171"/>
        <end position="1246"/>
    </location>
</feature>
<feature type="compositionally biased region" description="Acidic residues" evidence="2">
    <location>
        <begin position="1202"/>
        <end position="1223"/>
    </location>
</feature>
<feature type="compositionally biased region" description="Acidic residues" evidence="2">
    <location>
        <begin position="1230"/>
        <end position="1240"/>
    </location>
</feature>